<protein>
    <recommendedName>
        <fullName evidence="1">DNA-directed RNA polymerase subunit alpha</fullName>
        <shortName evidence="1">RNAP subunit alpha</shortName>
        <ecNumber evidence="1">2.7.7.6</ecNumber>
    </recommendedName>
    <alternativeName>
        <fullName evidence="1">RNA polymerase subunit alpha</fullName>
    </alternativeName>
    <alternativeName>
        <fullName evidence="1">Transcriptase subunit alpha</fullName>
    </alternativeName>
</protein>
<organism>
    <name type="scientific">Pectobacterium atrosepticum (strain SCRI 1043 / ATCC BAA-672)</name>
    <name type="common">Erwinia carotovora subsp. atroseptica</name>
    <dbReference type="NCBI Taxonomy" id="218491"/>
    <lineage>
        <taxon>Bacteria</taxon>
        <taxon>Pseudomonadati</taxon>
        <taxon>Pseudomonadota</taxon>
        <taxon>Gammaproteobacteria</taxon>
        <taxon>Enterobacterales</taxon>
        <taxon>Pectobacteriaceae</taxon>
        <taxon>Pectobacterium</taxon>
    </lineage>
</organism>
<reference key="1">
    <citation type="journal article" date="2004" name="Proc. Natl. Acad. Sci. U.S.A.">
        <title>Genome sequence of the enterobacterial phytopathogen Erwinia carotovora subsp. atroseptica and characterization of virulence factors.</title>
        <authorList>
            <person name="Bell K.S."/>
            <person name="Sebaihia M."/>
            <person name="Pritchard L."/>
            <person name="Holden M.T.G."/>
            <person name="Hyman L.J."/>
            <person name="Holeva M.C."/>
            <person name="Thomson N.R."/>
            <person name="Bentley S.D."/>
            <person name="Churcher L.J.C."/>
            <person name="Mungall K."/>
            <person name="Atkin R."/>
            <person name="Bason N."/>
            <person name="Brooks K."/>
            <person name="Chillingworth T."/>
            <person name="Clark K."/>
            <person name="Doggett J."/>
            <person name="Fraser A."/>
            <person name="Hance Z."/>
            <person name="Hauser H."/>
            <person name="Jagels K."/>
            <person name="Moule S."/>
            <person name="Norbertczak H."/>
            <person name="Ormond D."/>
            <person name="Price C."/>
            <person name="Quail M.A."/>
            <person name="Sanders M."/>
            <person name="Walker D."/>
            <person name="Whitehead S."/>
            <person name="Salmond G.P.C."/>
            <person name="Birch P.R.J."/>
            <person name="Parkhill J."/>
            <person name="Toth I.K."/>
        </authorList>
    </citation>
    <scope>NUCLEOTIDE SEQUENCE [LARGE SCALE GENOMIC DNA]</scope>
    <source>
        <strain>SCRI 1043 / ATCC BAA-672</strain>
    </source>
</reference>
<proteinExistence type="inferred from homology"/>
<name>RPOA_PECAS</name>
<sequence>MQGSVTEFLKPRLVDIEQVSSTHAKVTLEPLERGFGHTLGNALRRILLSSMPGCAVTEVEIDGVLHEYSTKEGVQEDILEILLNLKGLAVRVQGKDEVILTLNKSGIGPVTAADIIHDGDVEIVKPQHLICHLTDENASISMRIKVQRGRGYVPASARIHTEEDERPIGRLLVDACYSPVERIAYNVEAARVEQRTDLDKLVIEMETNGTIDPEEAIRRAATILAEQLEAFVDLRDVRQPEVKEEKPEFDPILLRPVDDLELTVRSANCLKAEAIHYIGDLVQRTEVELLKTPNLGKKSLTEIKDVLASRGLSLGMRLENWPPASIADE</sequence>
<evidence type="ECO:0000255" key="1">
    <source>
        <dbReference type="HAMAP-Rule" id="MF_00059"/>
    </source>
</evidence>
<accession>Q6CZZ5</accession>
<keyword id="KW-0240">DNA-directed RNA polymerase</keyword>
<keyword id="KW-0548">Nucleotidyltransferase</keyword>
<keyword id="KW-1185">Reference proteome</keyword>
<keyword id="KW-0804">Transcription</keyword>
<keyword id="KW-0808">Transferase</keyword>
<comment type="function">
    <text evidence="1">DNA-dependent RNA polymerase catalyzes the transcription of DNA into RNA using the four ribonucleoside triphosphates as substrates.</text>
</comment>
<comment type="catalytic activity">
    <reaction evidence="1">
        <text>RNA(n) + a ribonucleoside 5'-triphosphate = RNA(n+1) + diphosphate</text>
        <dbReference type="Rhea" id="RHEA:21248"/>
        <dbReference type="Rhea" id="RHEA-COMP:14527"/>
        <dbReference type="Rhea" id="RHEA-COMP:17342"/>
        <dbReference type="ChEBI" id="CHEBI:33019"/>
        <dbReference type="ChEBI" id="CHEBI:61557"/>
        <dbReference type="ChEBI" id="CHEBI:140395"/>
        <dbReference type="EC" id="2.7.7.6"/>
    </reaction>
</comment>
<comment type="subunit">
    <text evidence="1">Homodimer. The RNAP catalytic core consists of 2 alpha, 1 beta, 1 beta' and 1 omega subunit. When a sigma factor is associated with the core the holoenzyme is formed, which can initiate transcription.</text>
</comment>
<comment type="domain">
    <text evidence="1">The N-terminal domain is essential for RNAP assembly and basal transcription, whereas the C-terminal domain is involved in interaction with transcriptional regulators and with upstream promoter elements.</text>
</comment>
<comment type="similarity">
    <text evidence="1">Belongs to the RNA polymerase alpha chain family.</text>
</comment>
<feature type="chain" id="PRO_0000175308" description="DNA-directed RNA polymerase subunit alpha">
    <location>
        <begin position="1"/>
        <end position="329"/>
    </location>
</feature>
<feature type="region of interest" description="Alpha N-terminal domain (alpha-NTD)" evidence="1">
    <location>
        <begin position="1"/>
        <end position="235"/>
    </location>
</feature>
<feature type="region of interest" description="Alpha C-terminal domain (alpha-CTD)" evidence="1">
    <location>
        <begin position="249"/>
        <end position="329"/>
    </location>
</feature>
<gene>
    <name evidence="1" type="primary">rpoA</name>
    <name type="ordered locus">ECA4006</name>
</gene>
<dbReference type="EC" id="2.7.7.6" evidence="1"/>
<dbReference type="EMBL" id="BX950851">
    <property type="protein sequence ID" value="CAG76903.1"/>
    <property type="molecule type" value="Genomic_DNA"/>
</dbReference>
<dbReference type="RefSeq" id="WP_005970247.1">
    <property type="nucleotide sequence ID" value="NC_004547.2"/>
</dbReference>
<dbReference type="SMR" id="Q6CZZ5"/>
<dbReference type="STRING" id="218491.ECA4006"/>
<dbReference type="GeneID" id="93391955"/>
<dbReference type="KEGG" id="eca:ECA4006"/>
<dbReference type="eggNOG" id="COG0202">
    <property type="taxonomic scope" value="Bacteria"/>
</dbReference>
<dbReference type="HOGENOM" id="CLU_053084_0_1_6"/>
<dbReference type="OrthoDB" id="9805706at2"/>
<dbReference type="Proteomes" id="UP000007966">
    <property type="component" value="Chromosome"/>
</dbReference>
<dbReference type="GO" id="GO:0005737">
    <property type="term" value="C:cytoplasm"/>
    <property type="evidence" value="ECO:0007669"/>
    <property type="project" value="UniProtKB-ARBA"/>
</dbReference>
<dbReference type="GO" id="GO:0000428">
    <property type="term" value="C:DNA-directed RNA polymerase complex"/>
    <property type="evidence" value="ECO:0007669"/>
    <property type="project" value="UniProtKB-KW"/>
</dbReference>
<dbReference type="GO" id="GO:0003677">
    <property type="term" value="F:DNA binding"/>
    <property type="evidence" value="ECO:0007669"/>
    <property type="project" value="UniProtKB-UniRule"/>
</dbReference>
<dbReference type="GO" id="GO:0003899">
    <property type="term" value="F:DNA-directed RNA polymerase activity"/>
    <property type="evidence" value="ECO:0007669"/>
    <property type="project" value="UniProtKB-UniRule"/>
</dbReference>
<dbReference type="GO" id="GO:0046983">
    <property type="term" value="F:protein dimerization activity"/>
    <property type="evidence" value="ECO:0007669"/>
    <property type="project" value="InterPro"/>
</dbReference>
<dbReference type="GO" id="GO:0006351">
    <property type="term" value="P:DNA-templated transcription"/>
    <property type="evidence" value="ECO:0007669"/>
    <property type="project" value="UniProtKB-UniRule"/>
</dbReference>
<dbReference type="CDD" id="cd06928">
    <property type="entry name" value="RNAP_alpha_NTD"/>
    <property type="match status" value="1"/>
</dbReference>
<dbReference type="FunFam" id="1.10.150.20:FF:000001">
    <property type="entry name" value="DNA-directed RNA polymerase subunit alpha"/>
    <property type="match status" value="1"/>
</dbReference>
<dbReference type="FunFam" id="2.170.120.12:FF:000001">
    <property type="entry name" value="DNA-directed RNA polymerase subunit alpha"/>
    <property type="match status" value="1"/>
</dbReference>
<dbReference type="Gene3D" id="1.10.150.20">
    <property type="entry name" value="5' to 3' exonuclease, C-terminal subdomain"/>
    <property type="match status" value="1"/>
</dbReference>
<dbReference type="Gene3D" id="2.170.120.12">
    <property type="entry name" value="DNA-directed RNA polymerase, insert domain"/>
    <property type="match status" value="1"/>
</dbReference>
<dbReference type="Gene3D" id="3.30.1360.10">
    <property type="entry name" value="RNA polymerase, RBP11-like subunit"/>
    <property type="match status" value="1"/>
</dbReference>
<dbReference type="HAMAP" id="MF_00059">
    <property type="entry name" value="RNApol_bact_RpoA"/>
    <property type="match status" value="1"/>
</dbReference>
<dbReference type="InterPro" id="IPR011262">
    <property type="entry name" value="DNA-dir_RNA_pol_insert"/>
</dbReference>
<dbReference type="InterPro" id="IPR011263">
    <property type="entry name" value="DNA-dir_RNA_pol_RpoA/D/Rpb3"/>
</dbReference>
<dbReference type="InterPro" id="IPR011773">
    <property type="entry name" value="DNA-dir_RpoA"/>
</dbReference>
<dbReference type="InterPro" id="IPR036603">
    <property type="entry name" value="RBP11-like"/>
</dbReference>
<dbReference type="InterPro" id="IPR011260">
    <property type="entry name" value="RNAP_asu_C"/>
</dbReference>
<dbReference type="InterPro" id="IPR036643">
    <property type="entry name" value="RNApol_insert_sf"/>
</dbReference>
<dbReference type="NCBIfam" id="NF003513">
    <property type="entry name" value="PRK05182.1-2"/>
    <property type="match status" value="1"/>
</dbReference>
<dbReference type="NCBIfam" id="NF003519">
    <property type="entry name" value="PRK05182.2-5"/>
    <property type="match status" value="1"/>
</dbReference>
<dbReference type="NCBIfam" id="TIGR02027">
    <property type="entry name" value="rpoA"/>
    <property type="match status" value="1"/>
</dbReference>
<dbReference type="Pfam" id="PF01000">
    <property type="entry name" value="RNA_pol_A_bac"/>
    <property type="match status" value="1"/>
</dbReference>
<dbReference type="Pfam" id="PF03118">
    <property type="entry name" value="RNA_pol_A_CTD"/>
    <property type="match status" value="1"/>
</dbReference>
<dbReference type="Pfam" id="PF01193">
    <property type="entry name" value="RNA_pol_L"/>
    <property type="match status" value="1"/>
</dbReference>
<dbReference type="SMART" id="SM00662">
    <property type="entry name" value="RPOLD"/>
    <property type="match status" value="1"/>
</dbReference>
<dbReference type="SUPFAM" id="SSF47789">
    <property type="entry name" value="C-terminal domain of RNA polymerase alpha subunit"/>
    <property type="match status" value="1"/>
</dbReference>
<dbReference type="SUPFAM" id="SSF56553">
    <property type="entry name" value="Insert subdomain of RNA polymerase alpha subunit"/>
    <property type="match status" value="1"/>
</dbReference>
<dbReference type="SUPFAM" id="SSF55257">
    <property type="entry name" value="RBP11-like subunits of RNA polymerase"/>
    <property type="match status" value="1"/>
</dbReference>